<gene>
    <name evidence="1" type="primary">clpP</name>
</gene>
<dbReference type="EC" id="3.4.21.92" evidence="1"/>
<dbReference type="EMBL" id="EF044213">
    <property type="protein sequence ID" value="ABJ89703.1"/>
    <property type="molecule type" value="Genomic_DNA"/>
</dbReference>
<dbReference type="RefSeq" id="YP_817507.1">
    <property type="nucleotide sequence ID" value="NC_008535.1"/>
</dbReference>
<dbReference type="SMR" id="A0A360"/>
<dbReference type="MEROPS" id="S14.002"/>
<dbReference type="GeneID" id="4421753"/>
<dbReference type="OrthoDB" id="1882605at2759"/>
<dbReference type="Proteomes" id="UP000515148">
    <property type="component" value="Chloroplast Pltd"/>
</dbReference>
<dbReference type="GO" id="GO:0009570">
    <property type="term" value="C:chloroplast stroma"/>
    <property type="evidence" value="ECO:0007669"/>
    <property type="project" value="UniProtKB-SubCell"/>
</dbReference>
<dbReference type="GO" id="GO:0009368">
    <property type="term" value="C:endopeptidase Clp complex"/>
    <property type="evidence" value="ECO:0007669"/>
    <property type="project" value="TreeGrafter"/>
</dbReference>
<dbReference type="GO" id="GO:0004176">
    <property type="term" value="F:ATP-dependent peptidase activity"/>
    <property type="evidence" value="ECO:0007669"/>
    <property type="project" value="InterPro"/>
</dbReference>
<dbReference type="GO" id="GO:0051117">
    <property type="term" value="F:ATPase binding"/>
    <property type="evidence" value="ECO:0007669"/>
    <property type="project" value="TreeGrafter"/>
</dbReference>
<dbReference type="GO" id="GO:0004252">
    <property type="term" value="F:serine-type endopeptidase activity"/>
    <property type="evidence" value="ECO:0007669"/>
    <property type="project" value="UniProtKB-UniRule"/>
</dbReference>
<dbReference type="GO" id="GO:0006515">
    <property type="term" value="P:protein quality control for misfolded or incompletely synthesized proteins"/>
    <property type="evidence" value="ECO:0007669"/>
    <property type="project" value="TreeGrafter"/>
</dbReference>
<dbReference type="CDD" id="cd07017">
    <property type="entry name" value="S14_ClpP_2"/>
    <property type="match status" value="1"/>
</dbReference>
<dbReference type="FunFam" id="3.90.226.10:FF:000006">
    <property type="entry name" value="ATP-dependent Clp protease proteolytic subunit"/>
    <property type="match status" value="1"/>
</dbReference>
<dbReference type="Gene3D" id="3.90.226.10">
    <property type="entry name" value="2-enoyl-CoA Hydratase, Chain A, domain 1"/>
    <property type="match status" value="1"/>
</dbReference>
<dbReference type="HAMAP" id="MF_00444">
    <property type="entry name" value="ClpP"/>
    <property type="match status" value="1"/>
</dbReference>
<dbReference type="InterPro" id="IPR001907">
    <property type="entry name" value="ClpP"/>
</dbReference>
<dbReference type="InterPro" id="IPR029045">
    <property type="entry name" value="ClpP/crotonase-like_dom_sf"/>
</dbReference>
<dbReference type="InterPro" id="IPR023562">
    <property type="entry name" value="ClpP/TepA"/>
</dbReference>
<dbReference type="InterPro" id="IPR033135">
    <property type="entry name" value="ClpP_His_AS"/>
</dbReference>
<dbReference type="InterPro" id="IPR018215">
    <property type="entry name" value="ClpP_Ser_AS"/>
</dbReference>
<dbReference type="PANTHER" id="PTHR10381">
    <property type="entry name" value="ATP-DEPENDENT CLP PROTEASE PROTEOLYTIC SUBUNIT"/>
    <property type="match status" value="1"/>
</dbReference>
<dbReference type="PANTHER" id="PTHR10381:SF15">
    <property type="entry name" value="CHLOROPLASTIC ATP-DEPENDENT CLP PROTEASE PROTEOLYTIC SUBUNIT 1"/>
    <property type="match status" value="1"/>
</dbReference>
<dbReference type="Pfam" id="PF00574">
    <property type="entry name" value="CLP_protease"/>
    <property type="match status" value="1"/>
</dbReference>
<dbReference type="PRINTS" id="PR00127">
    <property type="entry name" value="CLPPROTEASEP"/>
</dbReference>
<dbReference type="SUPFAM" id="SSF52096">
    <property type="entry name" value="ClpP/crotonase"/>
    <property type="match status" value="1"/>
</dbReference>
<dbReference type="PROSITE" id="PS00382">
    <property type="entry name" value="CLP_PROTEASE_HIS"/>
    <property type="match status" value="1"/>
</dbReference>
<dbReference type="PROSITE" id="PS00381">
    <property type="entry name" value="CLP_PROTEASE_SER"/>
    <property type="match status" value="1"/>
</dbReference>
<name>CLPP_COFAR</name>
<organism>
    <name type="scientific">Coffea arabica</name>
    <name type="common">Arabian coffee</name>
    <dbReference type="NCBI Taxonomy" id="13443"/>
    <lineage>
        <taxon>Eukaryota</taxon>
        <taxon>Viridiplantae</taxon>
        <taxon>Streptophyta</taxon>
        <taxon>Embryophyta</taxon>
        <taxon>Tracheophyta</taxon>
        <taxon>Spermatophyta</taxon>
        <taxon>Magnoliopsida</taxon>
        <taxon>eudicotyledons</taxon>
        <taxon>Gunneridae</taxon>
        <taxon>Pentapetalae</taxon>
        <taxon>asterids</taxon>
        <taxon>lamiids</taxon>
        <taxon>Gentianales</taxon>
        <taxon>Rubiaceae</taxon>
        <taxon>Ixoroideae</taxon>
        <taxon>Gardenieae complex</taxon>
        <taxon>Bertiereae - Coffeeae clade</taxon>
        <taxon>Coffeeae</taxon>
        <taxon>Coffea</taxon>
    </lineage>
</organism>
<comment type="function">
    <text evidence="1">Cleaves peptides in various proteins in a process that requires ATP hydrolysis. Has a chymotrypsin-like activity. Plays a major role in the degradation of misfolded proteins.</text>
</comment>
<comment type="catalytic activity">
    <reaction evidence="1">
        <text>Hydrolysis of proteins to small peptides in the presence of ATP and magnesium. alpha-casein is the usual test substrate. In the absence of ATP, only oligopeptides shorter than five residues are hydrolyzed (such as succinyl-Leu-Tyr-|-NHMec, and Leu-Tyr-Leu-|-Tyr-Trp, in which cleavage of the -Tyr-|-Leu- and -Tyr-|-Trp bonds also occurs).</text>
        <dbReference type="EC" id="3.4.21.92"/>
    </reaction>
</comment>
<comment type="subunit">
    <text>Component of the chloroplastic Clp protease core complex.</text>
</comment>
<comment type="subcellular location">
    <subcellularLocation>
        <location evidence="1">Plastid</location>
        <location evidence="1">Chloroplast stroma</location>
    </subcellularLocation>
</comment>
<comment type="similarity">
    <text evidence="1">Belongs to the peptidase S14 family.</text>
</comment>
<evidence type="ECO:0000255" key="1">
    <source>
        <dbReference type="HAMAP-Rule" id="MF_00444"/>
    </source>
</evidence>
<keyword id="KW-0150">Chloroplast</keyword>
<keyword id="KW-0378">Hydrolase</keyword>
<keyword id="KW-0934">Plastid</keyword>
<keyword id="KW-0645">Protease</keyword>
<keyword id="KW-1185">Reference proteome</keyword>
<keyword id="KW-0720">Serine protease</keyword>
<reference key="1">
    <citation type="journal article" date="2007" name="Plant Biotechnol. J.">
        <title>The complete nucleotide sequence of the coffee (Coffea arabica L.) chloroplast genome: organization and implications for biotechnology and phylogenetic relationships amongst angiosperms.</title>
        <authorList>
            <person name="Samson N."/>
            <person name="Bausher M.G."/>
            <person name="Lee S.-B."/>
            <person name="Jansen R.K."/>
            <person name="Daniell H."/>
        </authorList>
    </citation>
    <scope>NUCLEOTIDE SEQUENCE [LARGE SCALE GENOMIC DNA]</scope>
</reference>
<protein>
    <recommendedName>
        <fullName evidence="1">ATP-dependent Clp protease proteolytic subunit</fullName>
        <ecNumber evidence="1">3.4.21.92</ecNumber>
    </recommendedName>
    <alternativeName>
        <fullName evidence="1">Endopeptidase Clp</fullName>
    </alternativeName>
</protein>
<feature type="chain" id="PRO_0000275280" description="ATP-dependent Clp protease proteolytic subunit">
    <location>
        <begin position="1"/>
        <end position="196"/>
    </location>
</feature>
<feature type="active site" description="Nucleophile" evidence="1">
    <location>
        <position position="101"/>
    </location>
</feature>
<feature type="active site" evidence="1">
    <location>
        <position position="126"/>
    </location>
</feature>
<geneLocation type="chloroplast"/>
<accession>A0A360</accession>
<proteinExistence type="inferred from homology"/>
<sequence length="196" mass="22008">MPIGVPKVPFRSPGEEDASWVDVYNRLYRERLLFLGQAVDSEISNQLIGLMIYLSIEDDTKDLYLFINSPGGWVIPGVAIYDTMQFVRPDVHTICMGLAASMGSFILVGGEITKRLAFPHARVMIHQPASSFYEAQAGEFILEAEELLKLRETLTRVYVQRTGKPLWVVSEDMERDVFMSATEAQAYGIVDLVAVE</sequence>